<gene>
    <name evidence="1" type="primary">ilvD</name>
    <name type="ordered locus">SeHA_C4235</name>
</gene>
<sequence length="616" mass="65703">MPKYRSATTTHGRNMAGARALWRATGMTDSDFGKPIIAVVNSFTQFVPGHVHLRDLGKLVAEQIEASGGVAKEFNTIAVDDGIAMGHGGMLYSLPSRELIADSVEYMVNAHCADAMVCISNCDKITPGMLMASLRLNIPVIFVSGGPMEAGKTKLSDKIIKLDLVDAMIQGADPKVSDDQSNQVERSACPTCGSCSGMFTANSMNCLTEALGLSQPGNGSLLATHADRKQLFLNAGKRIVELTKRYYEQDDESALPRNIASKAAFENAMTLDIAMGGSTNTVLHLLAAAQEAEIDFTMSDIDKLSRKVPQLCKVAPSTQKYHMEDVHRAGGVLGILGELDRAGLLNRNVKNVLGLTLPQTLEQYDITVTQDEAVKKMFRAGPAGIRTTQAFSQDCRWDSLDDDRAAGCIRSLEYAYSKDGGLAVLYGNFAENGCIVKTAGVDDSILKFTGPAKVYESQDDAVEAILGGKVVEGDVVVIRYEGPKGGPGMQEMLYPTSFLKSMGLGKACALITDGRFSGGTSGLSIGHVSPEAASGGTIALIEDGDTIAIDIPNRSIQLQLSEAEIAARREAQEARGDKAWTPKNRQRQVSFALRAYASLATSADKGAVRDKSKLGG</sequence>
<organism>
    <name type="scientific">Salmonella heidelberg (strain SL476)</name>
    <dbReference type="NCBI Taxonomy" id="454169"/>
    <lineage>
        <taxon>Bacteria</taxon>
        <taxon>Pseudomonadati</taxon>
        <taxon>Pseudomonadota</taxon>
        <taxon>Gammaproteobacteria</taxon>
        <taxon>Enterobacterales</taxon>
        <taxon>Enterobacteriaceae</taxon>
        <taxon>Salmonella</taxon>
    </lineage>
</organism>
<feature type="chain" id="PRO_1000089409" description="Dihydroxy-acid dehydratase">
    <location>
        <begin position="1"/>
        <end position="616"/>
    </location>
</feature>
<feature type="active site" description="Proton acceptor" evidence="1">
    <location>
        <position position="517"/>
    </location>
</feature>
<feature type="binding site" evidence="1">
    <location>
        <position position="81"/>
    </location>
    <ligand>
        <name>Mg(2+)</name>
        <dbReference type="ChEBI" id="CHEBI:18420"/>
    </ligand>
</feature>
<feature type="binding site" evidence="1">
    <location>
        <position position="122"/>
    </location>
    <ligand>
        <name>[2Fe-2S] cluster</name>
        <dbReference type="ChEBI" id="CHEBI:190135"/>
    </ligand>
</feature>
<feature type="binding site" evidence="1">
    <location>
        <position position="123"/>
    </location>
    <ligand>
        <name>Mg(2+)</name>
        <dbReference type="ChEBI" id="CHEBI:18420"/>
    </ligand>
</feature>
<feature type="binding site" description="via carbamate group" evidence="1">
    <location>
        <position position="124"/>
    </location>
    <ligand>
        <name>Mg(2+)</name>
        <dbReference type="ChEBI" id="CHEBI:18420"/>
    </ligand>
</feature>
<feature type="binding site" evidence="1">
    <location>
        <position position="195"/>
    </location>
    <ligand>
        <name>[2Fe-2S] cluster</name>
        <dbReference type="ChEBI" id="CHEBI:190135"/>
    </ligand>
</feature>
<feature type="binding site" evidence="1">
    <location>
        <position position="491"/>
    </location>
    <ligand>
        <name>Mg(2+)</name>
        <dbReference type="ChEBI" id="CHEBI:18420"/>
    </ligand>
</feature>
<feature type="modified residue" description="N6-carboxylysine" evidence="1">
    <location>
        <position position="124"/>
    </location>
</feature>
<accession>B4TB04</accession>
<protein>
    <recommendedName>
        <fullName evidence="1">Dihydroxy-acid dehydratase</fullName>
        <shortName evidence="1">DAD</shortName>
        <ecNumber evidence="1">4.2.1.9</ecNumber>
    </recommendedName>
</protein>
<proteinExistence type="inferred from homology"/>
<name>ILVD_SALHS</name>
<keyword id="KW-0001">2Fe-2S</keyword>
<keyword id="KW-0028">Amino-acid biosynthesis</keyword>
<keyword id="KW-0100">Branched-chain amino acid biosynthesis</keyword>
<keyword id="KW-0408">Iron</keyword>
<keyword id="KW-0411">Iron-sulfur</keyword>
<keyword id="KW-0456">Lyase</keyword>
<keyword id="KW-0460">Magnesium</keyword>
<keyword id="KW-0479">Metal-binding</keyword>
<dbReference type="EC" id="4.2.1.9" evidence="1"/>
<dbReference type="EMBL" id="CP001120">
    <property type="protein sequence ID" value="ACF69918.1"/>
    <property type="molecule type" value="Genomic_DNA"/>
</dbReference>
<dbReference type="RefSeq" id="WP_001127429.1">
    <property type="nucleotide sequence ID" value="NC_011083.1"/>
</dbReference>
<dbReference type="SMR" id="B4TB04"/>
<dbReference type="KEGG" id="seh:SeHA_C4235"/>
<dbReference type="HOGENOM" id="CLU_014271_4_2_6"/>
<dbReference type="UniPathway" id="UPA00047">
    <property type="reaction ID" value="UER00057"/>
</dbReference>
<dbReference type="UniPathway" id="UPA00049">
    <property type="reaction ID" value="UER00061"/>
</dbReference>
<dbReference type="Proteomes" id="UP000001866">
    <property type="component" value="Chromosome"/>
</dbReference>
<dbReference type="GO" id="GO:0005829">
    <property type="term" value="C:cytosol"/>
    <property type="evidence" value="ECO:0007669"/>
    <property type="project" value="TreeGrafter"/>
</dbReference>
<dbReference type="GO" id="GO:0051537">
    <property type="term" value="F:2 iron, 2 sulfur cluster binding"/>
    <property type="evidence" value="ECO:0007669"/>
    <property type="project" value="UniProtKB-UniRule"/>
</dbReference>
<dbReference type="GO" id="GO:0004160">
    <property type="term" value="F:dihydroxy-acid dehydratase activity"/>
    <property type="evidence" value="ECO:0007669"/>
    <property type="project" value="UniProtKB-UniRule"/>
</dbReference>
<dbReference type="GO" id="GO:0000287">
    <property type="term" value="F:magnesium ion binding"/>
    <property type="evidence" value="ECO:0007669"/>
    <property type="project" value="UniProtKB-UniRule"/>
</dbReference>
<dbReference type="GO" id="GO:0009097">
    <property type="term" value="P:isoleucine biosynthetic process"/>
    <property type="evidence" value="ECO:0007669"/>
    <property type="project" value="UniProtKB-UniRule"/>
</dbReference>
<dbReference type="GO" id="GO:0009099">
    <property type="term" value="P:L-valine biosynthetic process"/>
    <property type="evidence" value="ECO:0007669"/>
    <property type="project" value="UniProtKB-UniRule"/>
</dbReference>
<dbReference type="FunFam" id="3.50.30.80:FF:000001">
    <property type="entry name" value="Dihydroxy-acid dehydratase"/>
    <property type="match status" value="1"/>
</dbReference>
<dbReference type="Gene3D" id="3.50.30.80">
    <property type="entry name" value="IlvD/EDD C-terminal domain-like"/>
    <property type="match status" value="1"/>
</dbReference>
<dbReference type="HAMAP" id="MF_00012">
    <property type="entry name" value="IlvD"/>
    <property type="match status" value="1"/>
</dbReference>
<dbReference type="InterPro" id="IPR042096">
    <property type="entry name" value="Dihydro-acid_dehy_C"/>
</dbReference>
<dbReference type="InterPro" id="IPR004404">
    <property type="entry name" value="DihydroxyA_deHydtase"/>
</dbReference>
<dbReference type="InterPro" id="IPR020558">
    <property type="entry name" value="DiOHA_6PGluconate_deHydtase_CS"/>
</dbReference>
<dbReference type="InterPro" id="IPR056740">
    <property type="entry name" value="ILV_EDD_C"/>
</dbReference>
<dbReference type="InterPro" id="IPR000581">
    <property type="entry name" value="ILV_EDD_N"/>
</dbReference>
<dbReference type="InterPro" id="IPR037237">
    <property type="entry name" value="IlvD/EDD_N"/>
</dbReference>
<dbReference type="NCBIfam" id="TIGR00110">
    <property type="entry name" value="ilvD"/>
    <property type="match status" value="1"/>
</dbReference>
<dbReference type="NCBIfam" id="NF009103">
    <property type="entry name" value="PRK12448.1"/>
    <property type="match status" value="1"/>
</dbReference>
<dbReference type="PANTHER" id="PTHR43661">
    <property type="entry name" value="D-XYLONATE DEHYDRATASE"/>
    <property type="match status" value="1"/>
</dbReference>
<dbReference type="PANTHER" id="PTHR43661:SF3">
    <property type="entry name" value="D-XYLONATE DEHYDRATASE YAGF-RELATED"/>
    <property type="match status" value="1"/>
</dbReference>
<dbReference type="Pfam" id="PF24877">
    <property type="entry name" value="ILV_EDD_C"/>
    <property type="match status" value="1"/>
</dbReference>
<dbReference type="Pfam" id="PF00920">
    <property type="entry name" value="ILVD_EDD_N"/>
    <property type="match status" value="1"/>
</dbReference>
<dbReference type="SUPFAM" id="SSF143975">
    <property type="entry name" value="IlvD/EDD N-terminal domain-like"/>
    <property type="match status" value="1"/>
</dbReference>
<dbReference type="SUPFAM" id="SSF52016">
    <property type="entry name" value="LeuD/IlvD-like"/>
    <property type="match status" value="1"/>
</dbReference>
<dbReference type="PROSITE" id="PS00886">
    <property type="entry name" value="ILVD_EDD_1"/>
    <property type="match status" value="1"/>
</dbReference>
<dbReference type="PROSITE" id="PS00887">
    <property type="entry name" value="ILVD_EDD_2"/>
    <property type="match status" value="1"/>
</dbReference>
<reference key="1">
    <citation type="journal article" date="2011" name="J. Bacteriol.">
        <title>Comparative genomics of 28 Salmonella enterica isolates: evidence for CRISPR-mediated adaptive sublineage evolution.</title>
        <authorList>
            <person name="Fricke W.F."/>
            <person name="Mammel M.K."/>
            <person name="McDermott P.F."/>
            <person name="Tartera C."/>
            <person name="White D.G."/>
            <person name="Leclerc J.E."/>
            <person name="Ravel J."/>
            <person name="Cebula T.A."/>
        </authorList>
    </citation>
    <scope>NUCLEOTIDE SEQUENCE [LARGE SCALE GENOMIC DNA]</scope>
    <source>
        <strain>SL476</strain>
    </source>
</reference>
<comment type="function">
    <text evidence="1">Functions in the biosynthesis of branched-chain amino acids. Catalyzes the dehydration of (2R,3R)-2,3-dihydroxy-3-methylpentanoate (2,3-dihydroxy-3-methylvalerate) into 2-oxo-3-methylpentanoate (2-oxo-3-methylvalerate) and of (2R)-2,3-dihydroxy-3-methylbutanoate (2,3-dihydroxyisovalerate) into 2-oxo-3-methylbutanoate (2-oxoisovalerate), the penultimate precursor to L-isoleucine and L-valine, respectively.</text>
</comment>
<comment type="catalytic activity">
    <reaction evidence="1">
        <text>(2R)-2,3-dihydroxy-3-methylbutanoate = 3-methyl-2-oxobutanoate + H2O</text>
        <dbReference type="Rhea" id="RHEA:24809"/>
        <dbReference type="ChEBI" id="CHEBI:11851"/>
        <dbReference type="ChEBI" id="CHEBI:15377"/>
        <dbReference type="ChEBI" id="CHEBI:49072"/>
        <dbReference type="EC" id="4.2.1.9"/>
    </reaction>
    <physiologicalReaction direction="left-to-right" evidence="1">
        <dbReference type="Rhea" id="RHEA:24810"/>
    </physiologicalReaction>
</comment>
<comment type="catalytic activity">
    <reaction evidence="1">
        <text>(2R,3R)-2,3-dihydroxy-3-methylpentanoate = (S)-3-methyl-2-oxopentanoate + H2O</text>
        <dbReference type="Rhea" id="RHEA:27694"/>
        <dbReference type="ChEBI" id="CHEBI:15377"/>
        <dbReference type="ChEBI" id="CHEBI:35146"/>
        <dbReference type="ChEBI" id="CHEBI:49258"/>
        <dbReference type="EC" id="4.2.1.9"/>
    </reaction>
    <physiologicalReaction direction="left-to-right" evidence="1">
        <dbReference type="Rhea" id="RHEA:27695"/>
    </physiologicalReaction>
</comment>
<comment type="cofactor">
    <cofactor evidence="1">
        <name>[2Fe-2S] cluster</name>
        <dbReference type="ChEBI" id="CHEBI:190135"/>
    </cofactor>
    <text evidence="1">Binds 1 [2Fe-2S] cluster per subunit. This cluster acts as a Lewis acid cofactor.</text>
</comment>
<comment type="cofactor">
    <cofactor evidence="1">
        <name>Mg(2+)</name>
        <dbReference type="ChEBI" id="CHEBI:18420"/>
    </cofactor>
</comment>
<comment type="pathway">
    <text evidence="1">Amino-acid biosynthesis; L-isoleucine biosynthesis; L-isoleucine from 2-oxobutanoate: step 3/4.</text>
</comment>
<comment type="pathway">
    <text evidence="1">Amino-acid biosynthesis; L-valine biosynthesis; L-valine from pyruvate: step 3/4.</text>
</comment>
<comment type="subunit">
    <text evidence="1">Homodimer.</text>
</comment>
<comment type="similarity">
    <text evidence="1">Belongs to the IlvD/Edd family.</text>
</comment>
<evidence type="ECO:0000255" key="1">
    <source>
        <dbReference type="HAMAP-Rule" id="MF_00012"/>
    </source>
</evidence>